<evidence type="ECO:0000250" key="1">
    <source>
        <dbReference type="UniProtKB" id="Q9I4E3"/>
    </source>
</evidence>
<evidence type="ECO:0000269" key="2">
    <source>
    </source>
</evidence>
<evidence type="ECO:0000303" key="3">
    <source>
    </source>
</evidence>
<evidence type="ECO:0000305" key="4"/>
<evidence type="ECO:0000312" key="5">
    <source>
        <dbReference type="EMBL" id="CCP45110.1"/>
    </source>
</evidence>
<organism>
    <name type="scientific">Mycobacterium tuberculosis (strain ATCC 25618 / H37Rv)</name>
    <dbReference type="NCBI Taxonomy" id="83332"/>
    <lineage>
        <taxon>Bacteria</taxon>
        <taxon>Bacillati</taxon>
        <taxon>Actinomycetota</taxon>
        <taxon>Actinomycetes</taxon>
        <taxon>Mycobacteriales</taxon>
        <taxon>Mycobacteriaceae</taxon>
        <taxon>Mycobacterium</taxon>
        <taxon>Mycobacterium tuberculosis complex</taxon>
    </lineage>
</organism>
<proteinExistence type="evidence at protein level"/>
<dbReference type="EC" id="3.5.3.18" evidence="2"/>
<dbReference type="EMBL" id="AL123456">
    <property type="protein sequence ID" value="CCP45110.1"/>
    <property type="molecule type" value="Genomic_DNA"/>
</dbReference>
<dbReference type="RefSeq" id="NP_216839.1">
    <property type="nucleotide sequence ID" value="NC_000962.3"/>
</dbReference>
<dbReference type="RefSeq" id="WP_003411960.1">
    <property type="nucleotide sequence ID" value="NC_000962.3"/>
</dbReference>
<dbReference type="SMR" id="P71889"/>
<dbReference type="STRING" id="83332.Rv2323c"/>
<dbReference type="PaxDb" id="83332-Rv2323c"/>
<dbReference type="DNASU" id="885480"/>
<dbReference type="GeneID" id="885480"/>
<dbReference type="KEGG" id="mtu:Rv2323c"/>
<dbReference type="KEGG" id="mtv:RVBD_2323c"/>
<dbReference type="PATRIC" id="fig|83332.111.peg.2587"/>
<dbReference type="TubercuList" id="Rv2323c"/>
<dbReference type="eggNOG" id="COG1834">
    <property type="taxonomic scope" value="Bacteria"/>
</dbReference>
<dbReference type="InParanoid" id="P71889"/>
<dbReference type="OrthoDB" id="9814070at2"/>
<dbReference type="PhylomeDB" id="P71889"/>
<dbReference type="Proteomes" id="UP000001584">
    <property type="component" value="Chromosome"/>
</dbReference>
<dbReference type="GO" id="GO:0016403">
    <property type="term" value="F:dimethylargininase activity"/>
    <property type="evidence" value="ECO:0000314"/>
    <property type="project" value="MTBBASE"/>
</dbReference>
<dbReference type="FunFam" id="3.75.10.10:FF:000014">
    <property type="entry name" value="N-dimethylarginine dimethylaminohydrolase"/>
    <property type="match status" value="1"/>
</dbReference>
<dbReference type="Gene3D" id="3.75.10.10">
    <property type="entry name" value="L-arginine/glycine Amidinotransferase, Chain A"/>
    <property type="match status" value="1"/>
</dbReference>
<dbReference type="InterPro" id="IPR033199">
    <property type="entry name" value="DDAH-like"/>
</dbReference>
<dbReference type="NCBIfam" id="NF045659">
    <property type="entry name" value="DiMArgaseDdahMtb"/>
    <property type="match status" value="1"/>
</dbReference>
<dbReference type="PANTHER" id="PTHR12737:SF9">
    <property type="entry name" value="DIMETHYLARGININASE"/>
    <property type="match status" value="1"/>
</dbReference>
<dbReference type="PANTHER" id="PTHR12737">
    <property type="entry name" value="DIMETHYLARGININE DIMETHYLAMINOHYDROLASE"/>
    <property type="match status" value="1"/>
</dbReference>
<dbReference type="Pfam" id="PF19420">
    <property type="entry name" value="DDAH_eukar"/>
    <property type="match status" value="1"/>
</dbReference>
<dbReference type="SUPFAM" id="SSF55909">
    <property type="entry name" value="Pentein"/>
    <property type="match status" value="1"/>
</dbReference>
<protein>
    <recommendedName>
        <fullName evidence="4">N(G),N(G)-dimethylarginine dimethylaminohydrolase</fullName>
        <shortName evidence="3">DDAH</shortName>
        <shortName evidence="3">Dimethylarginine dimethylaminohydrolase</shortName>
        <ecNumber evidence="2">3.5.3.18</ecNumber>
    </recommendedName>
    <alternativeName>
        <fullName evidence="4">Dimethylargininase</fullName>
    </alternativeName>
</protein>
<comment type="function">
    <text evidence="2">Hydrolyzes N(G),N(G)-dimethyl-L-arginine (ADMA) and N(G)-monomethyl-L-arginine (MMA).</text>
</comment>
<comment type="catalytic activity">
    <reaction evidence="2">
        <text>N(omega),N(omega)-dimethyl-L-arginine + H2O = dimethylamine + L-citrulline</text>
        <dbReference type="Rhea" id="RHEA:17305"/>
        <dbReference type="ChEBI" id="CHEBI:15377"/>
        <dbReference type="ChEBI" id="CHEBI:57743"/>
        <dbReference type="ChEBI" id="CHEBI:58040"/>
        <dbReference type="ChEBI" id="CHEBI:58326"/>
        <dbReference type="EC" id="3.5.3.18"/>
    </reaction>
</comment>
<comment type="catalytic activity">
    <reaction evidence="2">
        <text>N(omega)-methyl-L-arginine + H2O = L-citrulline + methylamine</text>
        <dbReference type="Rhea" id="RHEA:25173"/>
        <dbReference type="ChEBI" id="CHEBI:15377"/>
        <dbReference type="ChEBI" id="CHEBI:57743"/>
        <dbReference type="ChEBI" id="CHEBI:59338"/>
        <dbReference type="ChEBI" id="CHEBI:114953"/>
        <dbReference type="EC" id="3.5.3.18"/>
    </reaction>
</comment>
<comment type="similarity">
    <text evidence="4">Belongs to the DDAH family.</text>
</comment>
<accession>P71889</accession>
<accession>F2GIS4</accession>
<accession>I6YD48</accession>
<accession>Q7D7B6</accession>
<sequence>MENTQRPSFDCEIRAKYRWFMTDSYVAAARLGSPARRTPRTRRYAMTPPAFFAVAYAINPWMDVTAPVDVQVAQAQWEHLHQTYLRLGHSVDLIEPISGLPDMVYTANGGFIAHDIAVVARFRFPERAGESRAYASWMSSVGYRPVTTRHVNEGQGDLLMVGERVLAGYGFRTDQRAHAEIAAVLGLPVVSLELVDPRFYHLDTALAVLDDHTIAYYPPAFSTAAQEQLSALFPDAIVVGSADAFVFGLNAVSDGLNVVLPVAAMGFAAQLRAAGFEPVGVDLSELLKGGGSVKCCTLEIHP</sequence>
<name>DDAH_MYCTU</name>
<keyword id="KW-0378">Hydrolase</keyword>
<keyword id="KW-1185">Reference proteome</keyword>
<feature type="chain" id="PRO_0000443949" description="N(G),N(G)-dimethylarginine dimethylaminohydrolase">
    <location>
        <begin position="1"/>
        <end position="302"/>
    </location>
</feature>
<feature type="active site" description="Proton donor" evidence="1">
    <location>
        <position position="201"/>
    </location>
</feature>
<feature type="active site" description="Nucleophile" evidence="1">
    <location>
        <position position="295"/>
    </location>
</feature>
<feature type="binding site" evidence="1">
    <location>
        <position position="102"/>
    </location>
    <ligand>
        <name>substrate</name>
    </ligand>
</feature>
<feature type="binding site" evidence="1">
    <location>
        <position position="127"/>
    </location>
    <ligand>
        <name>substrate</name>
    </ligand>
</feature>
<feature type="binding site" evidence="1">
    <location>
        <position position="172"/>
    </location>
    <ligand>
        <name>substrate</name>
    </ligand>
</feature>
<gene>
    <name evidence="5" type="ordered locus">Rv2323c</name>
</gene>
<reference key="1">
    <citation type="journal article" date="1998" name="Nature">
        <title>Deciphering the biology of Mycobacterium tuberculosis from the complete genome sequence.</title>
        <authorList>
            <person name="Cole S.T."/>
            <person name="Brosch R."/>
            <person name="Parkhill J."/>
            <person name="Garnier T."/>
            <person name="Churcher C.M."/>
            <person name="Harris D.E."/>
            <person name="Gordon S.V."/>
            <person name="Eiglmeier K."/>
            <person name="Gas S."/>
            <person name="Barry C.E. III"/>
            <person name="Tekaia F."/>
            <person name="Badcock K."/>
            <person name="Basham D."/>
            <person name="Brown D."/>
            <person name="Chillingworth T."/>
            <person name="Connor R."/>
            <person name="Davies R.M."/>
            <person name="Devlin K."/>
            <person name="Feltwell T."/>
            <person name="Gentles S."/>
            <person name="Hamlin N."/>
            <person name="Holroyd S."/>
            <person name="Hornsby T."/>
            <person name="Jagels K."/>
            <person name="Krogh A."/>
            <person name="McLean J."/>
            <person name="Moule S."/>
            <person name="Murphy L.D."/>
            <person name="Oliver S."/>
            <person name="Osborne J."/>
            <person name="Quail M.A."/>
            <person name="Rajandream M.A."/>
            <person name="Rogers J."/>
            <person name="Rutter S."/>
            <person name="Seeger K."/>
            <person name="Skelton S."/>
            <person name="Squares S."/>
            <person name="Squares R."/>
            <person name="Sulston J.E."/>
            <person name="Taylor K."/>
            <person name="Whitehead S."/>
            <person name="Barrell B.G."/>
        </authorList>
    </citation>
    <scope>NUCLEOTIDE SEQUENCE [LARGE SCALE GENOMIC DNA]</scope>
    <source>
        <strain>ATCC 25618 / H37Rv</strain>
    </source>
</reference>
<reference key="2">
    <citation type="journal article" date="1999" name="Mol. Microbiol.">
        <title>Identification of microbial dimethylarginine dimethylaminohydrolase enzymes.</title>
        <authorList>
            <person name="Santa Maria J."/>
            <person name="Vallance P."/>
            <person name="Charles I.G."/>
            <person name="Leiper J.M."/>
        </authorList>
    </citation>
    <scope>FUNCTION</scope>
    <scope>CATALYTIC ACTIVITY</scope>
</reference>